<feature type="chain" id="PRO_0000224838" description="Holliday junction branch migration complex subunit RuvA">
    <location>
        <begin position="1"/>
        <end position="205"/>
    </location>
</feature>
<feature type="region of interest" description="Domain I" evidence="1">
    <location>
        <begin position="1"/>
        <end position="62"/>
    </location>
</feature>
<feature type="region of interest" description="Domain II" evidence="1">
    <location>
        <begin position="63"/>
        <end position="141"/>
    </location>
</feature>
<feature type="region of interest" description="Flexible linker" evidence="1">
    <location>
        <begin position="142"/>
        <end position="152"/>
    </location>
</feature>
<feature type="region of interest" description="Domain III" evidence="1">
    <location>
        <begin position="153"/>
        <end position="205"/>
    </location>
</feature>
<proteinExistence type="inferred from homology"/>
<comment type="function">
    <text evidence="1">The RuvA-RuvB-RuvC complex processes Holliday junction (HJ) DNA during genetic recombination and DNA repair, while the RuvA-RuvB complex plays an important role in the rescue of blocked DNA replication forks via replication fork reversal (RFR). RuvA specifically binds to HJ cruciform DNA, conferring on it an open structure. The RuvB hexamer acts as an ATP-dependent pump, pulling dsDNA into and through the RuvAB complex. HJ branch migration allows RuvC to scan DNA until it finds its consensus sequence, where it cleaves and resolves the cruciform DNA.</text>
</comment>
<comment type="subunit">
    <text evidence="1">Homotetramer. Forms an RuvA(8)-RuvB(12)-Holliday junction (HJ) complex. HJ DNA is sandwiched between 2 RuvA tetramers; dsDNA enters through RuvA and exits via RuvB. An RuvB hexamer assembles on each DNA strand where it exits the tetramer. Each RuvB hexamer is contacted by two RuvA subunits (via domain III) on 2 adjacent RuvB subunits; this complex drives branch migration. In the full resolvosome a probable DNA-RuvA(4)-RuvB(12)-RuvC(2) complex forms which resolves the HJ.</text>
</comment>
<comment type="subcellular location">
    <subcellularLocation>
        <location evidence="1">Cytoplasm</location>
    </subcellularLocation>
</comment>
<comment type="domain">
    <text evidence="1">Has three domains with a flexible linker between the domains II and III and assumes an 'L' shape. Domain III is highly mobile and contacts RuvB.</text>
</comment>
<comment type="similarity">
    <text evidence="1">Belongs to the RuvA family.</text>
</comment>
<keyword id="KW-0963">Cytoplasm</keyword>
<keyword id="KW-0227">DNA damage</keyword>
<keyword id="KW-0233">DNA recombination</keyword>
<keyword id="KW-0234">DNA repair</keyword>
<keyword id="KW-0238">DNA-binding</keyword>
<gene>
    <name evidence="1" type="primary">ruvA</name>
    <name type="ordered locus">BCE33L4165</name>
</gene>
<protein>
    <recommendedName>
        <fullName evidence="1">Holliday junction branch migration complex subunit RuvA</fullName>
    </recommendedName>
</protein>
<evidence type="ECO:0000255" key="1">
    <source>
        <dbReference type="HAMAP-Rule" id="MF_00031"/>
    </source>
</evidence>
<sequence length="205" mass="23194">MFEYVTGYVEYVGPEYVVIDHNGIGYQIFTPNPYVFQRSKQEIRVYTYHYVREDIMALYGFKTREERLLFTKLLGVSGIGPKGALAILASGQTGQVVQAIEHEDEKFLVKFPGVGKKTARQMILDLKGKLADVVPDAFVDLFSDEERFDEKKGSSAELDEALEALRALGYAEREVSRVVPELLKESLTTDQYIKKALSLLLNGKR</sequence>
<reference key="1">
    <citation type="journal article" date="2006" name="J. Bacteriol.">
        <title>Pathogenomic sequence analysis of Bacillus cereus and Bacillus thuringiensis isolates closely related to Bacillus anthracis.</title>
        <authorList>
            <person name="Han C.S."/>
            <person name="Xie G."/>
            <person name="Challacombe J.F."/>
            <person name="Altherr M.R."/>
            <person name="Bhotika S.S."/>
            <person name="Bruce D."/>
            <person name="Campbell C.S."/>
            <person name="Campbell M.L."/>
            <person name="Chen J."/>
            <person name="Chertkov O."/>
            <person name="Cleland C."/>
            <person name="Dimitrijevic M."/>
            <person name="Doggett N.A."/>
            <person name="Fawcett J.J."/>
            <person name="Glavina T."/>
            <person name="Goodwin L.A."/>
            <person name="Hill K.K."/>
            <person name="Hitchcock P."/>
            <person name="Jackson P.J."/>
            <person name="Keim P."/>
            <person name="Kewalramani A.R."/>
            <person name="Longmire J."/>
            <person name="Lucas S."/>
            <person name="Malfatti S."/>
            <person name="McMurry K."/>
            <person name="Meincke L.J."/>
            <person name="Misra M."/>
            <person name="Moseman B.L."/>
            <person name="Mundt M."/>
            <person name="Munk A.C."/>
            <person name="Okinaka R.T."/>
            <person name="Parson-Quintana B."/>
            <person name="Reilly L.P."/>
            <person name="Richardson P."/>
            <person name="Robinson D.L."/>
            <person name="Rubin E."/>
            <person name="Saunders E."/>
            <person name="Tapia R."/>
            <person name="Tesmer J.G."/>
            <person name="Thayer N."/>
            <person name="Thompson L.S."/>
            <person name="Tice H."/>
            <person name="Ticknor L.O."/>
            <person name="Wills P.L."/>
            <person name="Brettin T.S."/>
            <person name="Gilna P."/>
        </authorList>
    </citation>
    <scope>NUCLEOTIDE SEQUENCE [LARGE SCALE GENOMIC DNA]</scope>
    <source>
        <strain>ZK / E33L</strain>
    </source>
</reference>
<dbReference type="EMBL" id="CP000001">
    <property type="protein sequence ID" value="AAU16104.1"/>
    <property type="molecule type" value="Genomic_DNA"/>
</dbReference>
<dbReference type="RefSeq" id="WP_000464508.1">
    <property type="nucleotide sequence ID" value="NZ_CP009968.1"/>
</dbReference>
<dbReference type="SMR" id="Q634C3"/>
<dbReference type="GeneID" id="93006680"/>
<dbReference type="KEGG" id="bcz:BCE33L4165"/>
<dbReference type="PATRIC" id="fig|288681.22.peg.1218"/>
<dbReference type="Proteomes" id="UP000002612">
    <property type="component" value="Chromosome"/>
</dbReference>
<dbReference type="GO" id="GO:0005737">
    <property type="term" value="C:cytoplasm"/>
    <property type="evidence" value="ECO:0007669"/>
    <property type="project" value="UniProtKB-SubCell"/>
</dbReference>
<dbReference type="GO" id="GO:0009379">
    <property type="term" value="C:Holliday junction helicase complex"/>
    <property type="evidence" value="ECO:0007669"/>
    <property type="project" value="InterPro"/>
</dbReference>
<dbReference type="GO" id="GO:0048476">
    <property type="term" value="C:Holliday junction resolvase complex"/>
    <property type="evidence" value="ECO:0007669"/>
    <property type="project" value="UniProtKB-UniRule"/>
</dbReference>
<dbReference type="GO" id="GO:0005524">
    <property type="term" value="F:ATP binding"/>
    <property type="evidence" value="ECO:0007669"/>
    <property type="project" value="InterPro"/>
</dbReference>
<dbReference type="GO" id="GO:0000400">
    <property type="term" value="F:four-way junction DNA binding"/>
    <property type="evidence" value="ECO:0007669"/>
    <property type="project" value="UniProtKB-UniRule"/>
</dbReference>
<dbReference type="GO" id="GO:0009378">
    <property type="term" value="F:four-way junction helicase activity"/>
    <property type="evidence" value="ECO:0007669"/>
    <property type="project" value="InterPro"/>
</dbReference>
<dbReference type="GO" id="GO:0006310">
    <property type="term" value="P:DNA recombination"/>
    <property type="evidence" value="ECO:0007669"/>
    <property type="project" value="UniProtKB-UniRule"/>
</dbReference>
<dbReference type="GO" id="GO:0006281">
    <property type="term" value="P:DNA repair"/>
    <property type="evidence" value="ECO:0007669"/>
    <property type="project" value="UniProtKB-UniRule"/>
</dbReference>
<dbReference type="CDD" id="cd14332">
    <property type="entry name" value="UBA_RuvA_C"/>
    <property type="match status" value="1"/>
</dbReference>
<dbReference type="Gene3D" id="1.10.150.20">
    <property type="entry name" value="5' to 3' exonuclease, C-terminal subdomain"/>
    <property type="match status" value="1"/>
</dbReference>
<dbReference type="Gene3D" id="1.10.8.10">
    <property type="entry name" value="DNA helicase RuvA subunit, C-terminal domain"/>
    <property type="match status" value="1"/>
</dbReference>
<dbReference type="Gene3D" id="2.40.50.140">
    <property type="entry name" value="Nucleic acid-binding proteins"/>
    <property type="match status" value="1"/>
</dbReference>
<dbReference type="HAMAP" id="MF_00031">
    <property type="entry name" value="DNA_HJ_migration_RuvA"/>
    <property type="match status" value="1"/>
</dbReference>
<dbReference type="InterPro" id="IPR013849">
    <property type="entry name" value="DNA_helicase_Holl-junc_RuvA_I"/>
</dbReference>
<dbReference type="InterPro" id="IPR003583">
    <property type="entry name" value="Hlx-hairpin-Hlx_DNA-bd_motif"/>
</dbReference>
<dbReference type="InterPro" id="IPR012340">
    <property type="entry name" value="NA-bd_OB-fold"/>
</dbReference>
<dbReference type="InterPro" id="IPR000085">
    <property type="entry name" value="RuvA"/>
</dbReference>
<dbReference type="InterPro" id="IPR010994">
    <property type="entry name" value="RuvA_2-like"/>
</dbReference>
<dbReference type="InterPro" id="IPR011114">
    <property type="entry name" value="RuvA_C"/>
</dbReference>
<dbReference type="InterPro" id="IPR036267">
    <property type="entry name" value="RuvA_C_sf"/>
</dbReference>
<dbReference type="NCBIfam" id="TIGR00084">
    <property type="entry name" value="ruvA"/>
    <property type="match status" value="1"/>
</dbReference>
<dbReference type="Pfam" id="PF14520">
    <property type="entry name" value="HHH_5"/>
    <property type="match status" value="1"/>
</dbReference>
<dbReference type="Pfam" id="PF07499">
    <property type="entry name" value="RuvA_C"/>
    <property type="match status" value="1"/>
</dbReference>
<dbReference type="Pfam" id="PF01330">
    <property type="entry name" value="RuvA_N"/>
    <property type="match status" value="1"/>
</dbReference>
<dbReference type="SMART" id="SM00278">
    <property type="entry name" value="HhH1"/>
    <property type="match status" value="2"/>
</dbReference>
<dbReference type="SUPFAM" id="SSF46929">
    <property type="entry name" value="DNA helicase RuvA subunit, C-terminal domain"/>
    <property type="match status" value="1"/>
</dbReference>
<dbReference type="SUPFAM" id="SSF50249">
    <property type="entry name" value="Nucleic acid-binding proteins"/>
    <property type="match status" value="1"/>
</dbReference>
<dbReference type="SUPFAM" id="SSF47781">
    <property type="entry name" value="RuvA domain 2-like"/>
    <property type="match status" value="1"/>
</dbReference>
<organism>
    <name type="scientific">Bacillus cereus (strain ZK / E33L)</name>
    <dbReference type="NCBI Taxonomy" id="288681"/>
    <lineage>
        <taxon>Bacteria</taxon>
        <taxon>Bacillati</taxon>
        <taxon>Bacillota</taxon>
        <taxon>Bacilli</taxon>
        <taxon>Bacillales</taxon>
        <taxon>Bacillaceae</taxon>
        <taxon>Bacillus</taxon>
        <taxon>Bacillus cereus group</taxon>
    </lineage>
</organism>
<name>RUVA_BACCZ</name>
<accession>Q634C3</accession>